<feature type="chain" id="PRO_0000210399" description="Uncharacterized protein MG055.2">
    <location>
        <begin position="1"/>
        <end position="127"/>
    </location>
</feature>
<feature type="transmembrane region" description="Helical" evidence="1">
    <location>
        <begin position="13"/>
        <end position="35"/>
    </location>
</feature>
<feature type="transmembrane region" description="Helical" evidence="1">
    <location>
        <begin position="57"/>
        <end position="81"/>
    </location>
</feature>
<dbReference type="EMBL" id="L43967">
    <property type="protein sequence ID" value="AAC71281.1"/>
    <property type="molecule type" value="Genomic_DNA"/>
</dbReference>
<dbReference type="RefSeq" id="WP_009885720.1">
    <property type="nucleotide sequence ID" value="NC_000908.2"/>
</dbReference>
<dbReference type="SMR" id="Q9ZB81"/>
<dbReference type="STRING" id="243273.MG_474"/>
<dbReference type="GeneID" id="88282172"/>
<dbReference type="KEGG" id="mge:MG_474"/>
<dbReference type="eggNOG" id="ENOG5030NJV">
    <property type="taxonomic scope" value="Bacteria"/>
</dbReference>
<dbReference type="HOGENOM" id="CLU_1968116_0_0_14"/>
<dbReference type="InParanoid" id="Q9ZB81"/>
<dbReference type="OrthoDB" id="9949126at2"/>
<dbReference type="BioCyc" id="MGEN243273:G1GJ2-58-MONOMER"/>
<dbReference type="Proteomes" id="UP000000807">
    <property type="component" value="Chromosome"/>
</dbReference>
<dbReference type="GO" id="GO:0005886">
    <property type="term" value="C:plasma membrane"/>
    <property type="evidence" value="ECO:0007669"/>
    <property type="project" value="UniProtKB-SubCell"/>
</dbReference>
<dbReference type="NCBIfam" id="NF045737">
    <property type="entry name" value="MPN070"/>
    <property type="match status" value="1"/>
</dbReference>
<organism>
    <name type="scientific">Mycoplasma genitalium (strain ATCC 33530 / DSM 19775 / NCTC 10195 / G37)</name>
    <name type="common">Mycoplasmoides genitalium</name>
    <dbReference type="NCBI Taxonomy" id="243273"/>
    <lineage>
        <taxon>Bacteria</taxon>
        <taxon>Bacillati</taxon>
        <taxon>Mycoplasmatota</taxon>
        <taxon>Mycoplasmoidales</taxon>
        <taxon>Mycoplasmoidaceae</taxon>
        <taxon>Mycoplasmoides</taxon>
    </lineage>
</organism>
<accession>Q9ZB81</accession>
<proteinExistence type="predicted"/>
<keyword id="KW-1003">Cell membrane</keyword>
<keyword id="KW-0472">Membrane</keyword>
<keyword id="KW-1185">Reference proteome</keyword>
<keyword id="KW-0812">Transmembrane</keyword>
<keyword id="KW-1133">Transmembrane helix</keyword>
<reference key="1">
    <citation type="journal article" date="1995" name="Science">
        <title>The minimal gene complement of Mycoplasma genitalium.</title>
        <authorList>
            <person name="Fraser C.M."/>
            <person name="Gocayne J.D."/>
            <person name="White O."/>
            <person name="Adams M.D."/>
            <person name="Clayton R.A."/>
            <person name="Fleischmann R.D."/>
            <person name="Bult C.J."/>
            <person name="Kerlavage A.R."/>
            <person name="Sutton G.G."/>
            <person name="Kelley J.M."/>
            <person name="Fritchman J.L."/>
            <person name="Weidman J.F."/>
            <person name="Small K.V."/>
            <person name="Sandusky M."/>
            <person name="Fuhrmann J.L."/>
            <person name="Nguyen D.T."/>
            <person name="Utterback T.R."/>
            <person name="Saudek D.M."/>
            <person name="Phillips C.A."/>
            <person name="Merrick J.M."/>
            <person name="Tomb J.-F."/>
            <person name="Dougherty B.A."/>
            <person name="Bott K.F."/>
            <person name="Hu P.-C."/>
            <person name="Lucier T.S."/>
            <person name="Peterson S.N."/>
            <person name="Smith H.O."/>
            <person name="Hutchison C.A. III"/>
            <person name="Venter J.C."/>
        </authorList>
    </citation>
    <scope>NUCLEOTIDE SEQUENCE [LARGE SCALE GENOMIC DNA]</scope>
    <source>
        <strain>ATCC 33530 / DSM 19775 / NCTC 10195 / G37</strain>
    </source>
</reference>
<reference key="2">
    <citation type="submission" date="1998-10" db="EMBL/GenBank/DDBJ databases">
        <authorList>
            <person name="Fraser C.M."/>
            <person name="Gocayne J.D."/>
            <person name="White O."/>
            <person name="Adams M.D."/>
            <person name="Clayton R.A."/>
            <person name="Fleischmann R.D."/>
            <person name="Bult C.J."/>
            <person name="Kerlavage A.R."/>
            <person name="Sutton G.G."/>
            <person name="Kelley J.M."/>
            <person name="Fritchman J.L."/>
            <person name="Weidman J.F."/>
            <person name="Small K.V."/>
            <person name="Sandusky M."/>
            <person name="Fuhrmann J.L."/>
            <person name="Nguyen D.T."/>
            <person name="Utterback T.R."/>
            <person name="Saudek D.M."/>
            <person name="Phillips C.A."/>
            <person name="Merrick J.M."/>
            <person name="Tomb J.-F."/>
            <person name="Dougherty B.A."/>
            <person name="Bott K.F."/>
            <person name="Hu P.-C."/>
            <person name="Lucier T.S."/>
            <person name="Peterson S.N."/>
            <person name="Smith H.O."/>
            <person name="Hutchison C.A. III"/>
            <person name="Venter J.C."/>
        </authorList>
    </citation>
    <scope>IDENTIFICATION</scope>
</reference>
<protein>
    <recommendedName>
        <fullName>Uncharacterized protein MG055.2</fullName>
    </recommendedName>
</protein>
<evidence type="ECO:0000255" key="1"/>
<evidence type="ECO:0000305" key="2"/>
<name>Y055B_MYCGE</name>
<gene>
    <name type="ordered locus">MG055.2</name>
</gene>
<comment type="subcellular location">
    <subcellularLocation>
        <location evidence="2">Cell membrane</location>
        <topology evidence="2">Multi-pass membrane protein</topology>
    </subcellularLocation>
</comment>
<sequence length="127" mass="14631">MKVFKKLHNLNEILLLISIFFLVCIISLVGIGIIFDLIRKASLSAIRSDPIFFNLRAVLIVLGVFAICFMIIQLVISIMIWKTINTACENIEPKFKKILHWSCFLPFGLLQLYCYQKIKLVKQADNL</sequence>